<accession>Q6BXQ8</accession>
<organism>
    <name type="scientific">Debaryomyces hansenii (strain ATCC 36239 / CBS 767 / BCRC 21394 / JCM 1990 / NBRC 0083 / IGC 2968)</name>
    <name type="common">Yeast</name>
    <name type="synonym">Torulaspora hansenii</name>
    <dbReference type="NCBI Taxonomy" id="284592"/>
    <lineage>
        <taxon>Eukaryota</taxon>
        <taxon>Fungi</taxon>
        <taxon>Dikarya</taxon>
        <taxon>Ascomycota</taxon>
        <taxon>Saccharomycotina</taxon>
        <taxon>Pichiomycetes</taxon>
        <taxon>Debaryomycetaceae</taxon>
        <taxon>Debaryomyces</taxon>
    </lineage>
</organism>
<evidence type="ECO:0000250" key="1">
    <source>
        <dbReference type="UniProtKB" id="O14467"/>
    </source>
</evidence>
<evidence type="ECO:0000255" key="2">
    <source>
        <dbReference type="PROSITE-ProRule" id="PRU00257"/>
    </source>
</evidence>
<evidence type="ECO:0000256" key="3">
    <source>
        <dbReference type="SAM" id="MobiDB-lite"/>
    </source>
</evidence>
<evidence type="ECO:0000305" key="4"/>
<dbReference type="EMBL" id="CR382134">
    <property type="protein sequence ID" value="CAG84996.1"/>
    <property type="molecule type" value="Genomic_DNA"/>
</dbReference>
<dbReference type="RefSeq" id="XP_457011.1">
    <property type="nucleotide sequence ID" value="XM_457011.1"/>
</dbReference>
<dbReference type="SMR" id="Q6BXQ8"/>
<dbReference type="FunCoup" id="Q6BXQ8">
    <property type="interactions" value="792"/>
</dbReference>
<dbReference type="STRING" id="284592.Q6BXQ8"/>
<dbReference type="GeneID" id="2913754"/>
<dbReference type="KEGG" id="dha:DEHA2B01012g"/>
<dbReference type="VEuPathDB" id="FungiDB:DEHA2B01012g"/>
<dbReference type="eggNOG" id="KOG3398">
    <property type="taxonomic scope" value="Eukaryota"/>
</dbReference>
<dbReference type="HOGENOM" id="CLU_112609_0_1_1"/>
<dbReference type="InParanoid" id="Q6BXQ8"/>
<dbReference type="OMA" id="GKNKSCK"/>
<dbReference type="OrthoDB" id="10253401at2759"/>
<dbReference type="Proteomes" id="UP000000599">
    <property type="component" value="Chromosome B"/>
</dbReference>
<dbReference type="GO" id="GO:0005737">
    <property type="term" value="C:cytoplasm"/>
    <property type="evidence" value="ECO:0007669"/>
    <property type="project" value="EnsemblFungi"/>
</dbReference>
<dbReference type="GO" id="GO:0005634">
    <property type="term" value="C:nucleus"/>
    <property type="evidence" value="ECO:0007669"/>
    <property type="project" value="EnsemblFungi"/>
</dbReference>
<dbReference type="GO" id="GO:0003677">
    <property type="term" value="F:DNA binding"/>
    <property type="evidence" value="ECO:0007669"/>
    <property type="project" value="UniProtKB-KW"/>
</dbReference>
<dbReference type="GO" id="GO:0043022">
    <property type="term" value="F:ribosome binding"/>
    <property type="evidence" value="ECO:0007669"/>
    <property type="project" value="EnsemblFungi"/>
</dbReference>
<dbReference type="GO" id="GO:0140469">
    <property type="term" value="P:GCN2-mediated signaling"/>
    <property type="evidence" value="ECO:0007669"/>
    <property type="project" value="EnsemblFungi"/>
</dbReference>
<dbReference type="GO" id="GO:1990145">
    <property type="term" value="P:maintenance of translational fidelity"/>
    <property type="evidence" value="ECO:0007669"/>
    <property type="project" value="EnsemblFungi"/>
</dbReference>
<dbReference type="GO" id="GO:0072344">
    <property type="term" value="P:rescue of stalled ribosome"/>
    <property type="evidence" value="ECO:0007669"/>
    <property type="project" value="EnsemblFungi"/>
</dbReference>
<dbReference type="CDD" id="cd00093">
    <property type="entry name" value="HTH_XRE"/>
    <property type="match status" value="1"/>
</dbReference>
<dbReference type="FunFam" id="1.10.260.40:FF:000015">
    <property type="entry name" value="Endothelial differentiation-related factor 1"/>
    <property type="match status" value="1"/>
</dbReference>
<dbReference type="Gene3D" id="1.10.260.40">
    <property type="entry name" value="lambda repressor-like DNA-binding domains"/>
    <property type="match status" value="1"/>
</dbReference>
<dbReference type="InterPro" id="IPR001387">
    <property type="entry name" value="Cro/C1-type_HTH"/>
</dbReference>
<dbReference type="InterPro" id="IPR010982">
    <property type="entry name" value="Lambda_DNA-bd_dom_sf"/>
</dbReference>
<dbReference type="InterPro" id="IPR013729">
    <property type="entry name" value="MBF1_N"/>
</dbReference>
<dbReference type="PANTHER" id="PTHR10245:SF15">
    <property type="entry name" value="ENDOTHELIAL DIFFERENTIATION-RELATED FACTOR 1"/>
    <property type="match status" value="1"/>
</dbReference>
<dbReference type="PANTHER" id="PTHR10245">
    <property type="entry name" value="ENDOTHELIAL DIFFERENTIATION-RELATED FACTOR 1 MULTIPROTEIN BRIDGING FACTOR 1"/>
    <property type="match status" value="1"/>
</dbReference>
<dbReference type="Pfam" id="PF01381">
    <property type="entry name" value="HTH_3"/>
    <property type="match status" value="1"/>
</dbReference>
<dbReference type="Pfam" id="PF08523">
    <property type="entry name" value="MBF1"/>
    <property type="match status" value="1"/>
</dbReference>
<dbReference type="SMART" id="SM00530">
    <property type="entry name" value="HTH_XRE"/>
    <property type="match status" value="1"/>
</dbReference>
<dbReference type="SUPFAM" id="SSF47413">
    <property type="entry name" value="lambda repressor-like DNA-binding domains"/>
    <property type="match status" value="1"/>
</dbReference>
<dbReference type="PROSITE" id="PS50943">
    <property type="entry name" value="HTH_CROC1"/>
    <property type="match status" value="1"/>
</dbReference>
<gene>
    <name type="primary">MBF1</name>
    <name type="ordered locus">DEHA2B01012g</name>
</gene>
<feature type="chain" id="PRO_0000149806" description="Multiprotein-bridging factor 1">
    <location>
        <begin position="1"/>
        <end position="150"/>
    </location>
</feature>
<feature type="domain" description="HTH cro/C1-type" evidence="2">
    <location>
        <begin position="85"/>
        <end position="139"/>
    </location>
</feature>
<feature type="DNA-binding region" description="H-T-H motif" evidence="2">
    <location>
        <begin position="96"/>
        <end position="115"/>
    </location>
</feature>
<feature type="region of interest" description="Disordered" evidence="3">
    <location>
        <begin position="32"/>
        <end position="59"/>
    </location>
</feature>
<feature type="compositionally biased region" description="Polar residues" evidence="3">
    <location>
        <begin position="49"/>
        <end position="58"/>
    </location>
</feature>
<proteinExistence type="inferred from homology"/>
<reference key="1">
    <citation type="journal article" date="2004" name="Nature">
        <title>Genome evolution in yeasts.</title>
        <authorList>
            <person name="Dujon B."/>
            <person name="Sherman D."/>
            <person name="Fischer G."/>
            <person name="Durrens P."/>
            <person name="Casaregola S."/>
            <person name="Lafontaine I."/>
            <person name="de Montigny J."/>
            <person name="Marck C."/>
            <person name="Neuveglise C."/>
            <person name="Talla E."/>
            <person name="Goffard N."/>
            <person name="Frangeul L."/>
            <person name="Aigle M."/>
            <person name="Anthouard V."/>
            <person name="Babour A."/>
            <person name="Barbe V."/>
            <person name="Barnay S."/>
            <person name="Blanchin S."/>
            <person name="Beckerich J.-M."/>
            <person name="Beyne E."/>
            <person name="Bleykasten C."/>
            <person name="Boisrame A."/>
            <person name="Boyer J."/>
            <person name="Cattolico L."/>
            <person name="Confanioleri F."/>
            <person name="de Daruvar A."/>
            <person name="Despons L."/>
            <person name="Fabre E."/>
            <person name="Fairhead C."/>
            <person name="Ferry-Dumazet H."/>
            <person name="Groppi A."/>
            <person name="Hantraye F."/>
            <person name="Hennequin C."/>
            <person name="Jauniaux N."/>
            <person name="Joyet P."/>
            <person name="Kachouri R."/>
            <person name="Kerrest A."/>
            <person name="Koszul R."/>
            <person name="Lemaire M."/>
            <person name="Lesur I."/>
            <person name="Ma L."/>
            <person name="Muller H."/>
            <person name="Nicaud J.-M."/>
            <person name="Nikolski M."/>
            <person name="Oztas S."/>
            <person name="Ozier-Kalogeropoulos O."/>
            <person name="Pellenz S."/>
            <person name="Potier S."/>
            <person name="Richard G.-F."/>
            <person name="Straub M.-L."/>
            <person name="Suleau A."/>
            <person name="Swennen D."/>
            <person name="Tekaia F."/>
            <person name="Wesolowski-Louvel M."/>
            <person name="Westhof E."/>
            <person name="Wirth B."/>
            <person name="Zeniou-Meyer M."/>
            <person name="Zivanovic Y."/>
            <person name="Bolotin-Fukuhara M."/>
            <person name="Thierry A."/>
            <person name="Bouchier C."/>
            <person name="Caudron B."/>
            <person name="Scarpelli C."/>
            <person name="Gaillardin C."/>
            <person name="Weissenbach J."/>
            <person name="Wincker P."/>
            <person name="Souciet J.-L."/>
        </authorList>
    </citation>
    <scope>NUCLEOTIDE SEQUENCE [LARGE SCALE GENOMIC DNA]</scope>
    <source>
        <strain>ATCC 36239 / CBS 767 / BCRC 21394 / JCM 1990 / NBRC 0083 / IGC 2968</strain>
    </source>
</reference>
<comment type="function">
    <text evidence="1">Transcriptional coactivator that stimulates GCN4-dependent transcriptional activity by bridging the DNA-binding region of GCN4 and TBP (SPT15), thereby recruiting TBP to GCN4-bound promoters. Involved in induction of the ribosome quality control (RQC) pathway; a pathway that degrades nascent peptide chains during problematic translation. Required to prevent stalled ribosomes from frameshifting.</text>
</comment>
<comment type="similarity">
    <text evidence="4">Belongs to the MBF1 family.</text>
</comment>
<name>MBF1_DEBHA</name>
<keyword id="KW-0010">Activator</keyword>
<keyword id="KW-0238">DNA-binding</keyword>
<keyword id="KW-1185">Reference proteome</keyword>
<keyword id="KW-0804">Transcription</keyword>
<keyword id="KW-0805">Transcription regulation</keyword>
<protein>
    <recommendedName>
        <fullName>Multiprotein-bridging factor 1</fullName>
    </recommendedName>
</protein>
<sequence>MSDWDSVTIIGQKARIGGGGPRQNVAKTQAELNAARRSGNVVGTEKKYGSTNTKSNPEGQRLTKLDAVDDVVPTKKLDMNVGKAIQQARQEKKLTQKDLATKINEKPNVINDYEAGRAVPNQQLLGKLERALGVKLRGKNIGEPLFAKKK</sequence>